<evidence type="ECO:0000255" key="1">
    <source>
        <dbReference type="HAMAP-Rule" id="MF_00259"/>
    </source>
</evidence>
<protein>
    <recommendedName>
        <fullName evidence="1">Aminomethyltransferase</fullName>
        <ecNumber evidence="1">2.1.2.10</ecNumber>
    </recommendedName>
    <alternativeName>
        <fullName evidence="1">Glycine cleavage system T protein</fullName>
    </alternativeName>
</protein>
<keyword id="KW-0032">Aminotransferase</keyword>
<keyword id="KW-1185">Reference proteome</keyword>
<keyword id="KW-0808">Transferase</keyword>
<feature type="chain" id="PRO_1000114107" description="Aminomethyltransferase">
    <location>
        <begin position="1"/>
        <end position="375"/>
    </location>
</feature>
<sequence length="375" mass="40204">MTLQATPLNAIHRALGARMVDFGGWDMPVNYGSQIEEHNAVRADAGMFDVSHMCVVDLSGIHARAFLRGLLANNIDKLQTPGKALYSCMLDEKGGVIDDLIVYFFAEDRFRLVVNASTAVGDIEWIQSRNTATGSGVTITPRRGDLAPACVSKLAIVAVQGPNARQKVYDAFPSTQPADTLKPFNAVVVHDAEMGELMVARTGYTGEDGFELVVPAENVAGIWEKLSASGVRPAGLGARDTLRLEAGMNLYGQDMDIHTSPLDAGLSWTVDLQSERDFIGKSALLASGQQKTFAGLILRDKGGVLRAHQKVITPAGDGEITSGTFSPSLSQSIAFARLPRDIAPGTEVQVEIRDRKLTATVVKLPFVRNGKALVS</sequence>
<reference key="1">
    <citation type="journal article" date="2010" name="PLoS ONE">
        <title>The complete genome sequence of Cupriavidus metallidurans strain CH34, a master survivalist in harsh and anthropogenic environments.</title>
        <authorList>
            <person name="Janssen P.J."/>
            <person name="Van Houdt R."/>
            <person name="Moors H."/>
            <person name="Monsieurs P."/>
            <person name="Morin N."/>
            <person name="Michaux A."/>
            <person name="Benotmane M.A."/>
            <person name="Leys N."/>
            <person name="Vallaeys T."/>
            <person name="Lapidus A."/>
            <person name="Monchy S."/>
            <person name="Medigue C."/>
            <person name="Taghavi S."/>
            <person name="McCorkle S."/>
            <person name="Dunn J."/>
            <person name="van der Lelie D."/>
            <person name="Mergeay M."/>
        </authorList>
    </citation>
    <scope>NUCLEOTIDE SEQUENCE [LARGE SCALE GENOMIC DNA]</scope>
    <source>
        <strain>ATCC 43123 / DSM 2839 / NBRC 102507 / CH34</strain>
    </source>
</reference>
<name>GCST_CUPMC</name>
<gene>
    <name evidence="1" type="primary">gcvT</name>
    <name type="ordered locus">Rmet_3480</name>
</gene>
<accession>Q1LHM4</accession>
<comment type="function">
    <text evidence="1">The glycine cleavage system catalyzes the degradation of glycine.</text>
</comment>
<comment type="catalytic activity">
    <reaction evidence="1">
        <text>N(6)-[(R)-S(8)-aminomethyldihydrolipoyl]-L-lysyl-[protein] + (6S)-5,6,7,8-tetrahydrofolate = N(6)-[(R)-dihydrolipoyl]-L-lysyl-[protein] + (6R)-5,10-methylene-5,6,7,8-tetrahydrofolate + NH4(+)</text>
        <dbReference type="Rhea" id="RHEA:16945"/>
        <dbReference type="Rhea" id="RHEA-COMP:10475"/>
        <dbReference type="Rhea" id="RHEA-COMP:10492"/>
        <dbReference type="ChEBI" id="CHEBI:15636"/>
        <dbReference type="ChEBI" id="CHEBI:28938"/>
        <dbReference type="ChEBI" id="CHEBI:57453"/>
        <dbReference type="ChEBI" id="CHEBI:83100"/>
        <dbReference type="ChEBI" id="CHEBI:83143"/>
        <dbReference type="EC" id="2.1.2.10"/>
    </reaction>
</comment>
<comment type="subunit">
    <text evidence="1">The glycine cleavage system is composed of four proteins: P, T, L and H.</text>
</comment>
<comment type="similarity">
    <text evidence="1">Belongs to the GcvT family.</text>
</comment>
<proteinExistence type="inferred from homology"/>
<dbReference type="EC" id="2.1.2.10" evidence="1"/>
<dbReference type="EMBL" id="CP000352">
    <property type="protein sequence ID" value="ABF10352.1"/>
    <property type="molecule type" value="Genomic_DNA"/>
</dbReference>
<dbReference type="RefSeq" id="WP_011517910.1">
    <property type="nucleotide sequence ID" value="NC_007973.1"/>
</dbReference>
<dbReference type="SMR" id="Q1LHM4"/>
<dbReference type="STRING" id="266264.Rmet_3480"/>
<dbReference type="KEGG" id="rme:Rmet_3480"/>
<dbReference type="eggNOG" id="COG0404">
    <property type="taxonomic scope" value="Bacteria"/>
</dbReference>
<dbReference type="HOGENOM" id="CLU_007884_10_2_4"/>
<dbReference type="Proteomes" id="UP000002429">
    <property type="component" value="Chromosome"/>
</dbReference>
<dbReference type="GO" id="GO:0005829">
    <property type="term" value="C:cytosol"/>
    <property type="evidence" value="ECO:0007669"/>
    <property type="project" value="TreeGrafter"/>
</dbReference>
<dbReference type="GO" id="GO:0005960">
    <property type="term" value="C:glycine cleavage complex"/>
    <property type="evidence" value="ECO:0007669"/>
    <property type="project" value="InterPro"/>
</dbReference>
<dbReference type="GO" id="GO:0004047">
    <property type="term" value="F:aminomethyltransferase activity"/>
    <property type="evidence" value="ECO:0007669"/>
    <property type="project" value="UniProtKB-UniRule"/>
</dbReference>
<dbReference type="GO" id="GO:0008483">
    <property type="term" value="F:transaminase activity"/>
    <property type="evidence" value="ECO:0007669"/>
    <property type="project" value="UniProtKB-KW"/>
</dbReference>
<dbReference type="GO" id="GO:0019464">
    <property type="term" value="P:glycine decarboxylation via glycine cleavage system"/>
    <property type="evidence" value="ECO:0007669"/>
    <property type="project" value="UniProtKB-UniRule"/>
</dbReference>
<dbReference type="FunFam" id="3.30.70.1400:FF:000001">
    <property type="entry name" value="Aminomethyltransferase"/>
    <property type="match status" value="1"/>
</dbReference>
<dbReference type="FunFam" id="4.10.1250.10:FF:000001">
    <property type="entry name" value="Aminomethyltransferase"/>
    <property type="match status" value="1"/>
</dbReference>
<dbReference type="Gene3D" id="2.40.30.110">
    <property type="entry name" value="Aminomethyltransferase beta-barrel domains"/>
    <property type="match status" value="1"/>
</dbReference>
<dbReference type="Gene3D" id="3.30.70.1400">
    <property type="entry name" value="Aminomethyltransferase beta-barrel domains"/>
    <property type="match status" value="1"/>
</dbReference>
<dbReference type="Gene3D" id="4.10.1250.10">
    <property type="entry name" value="Aminomethyltransferase fragment"/>
    <property type="match status" value="1"/>
</dbReference>
<dbReference type="Gene3D" id="3.30.1360.120">
    <property type="entry name" value="Probable tRNA modification gtpase trme, domain 1"/>
    <property type="match status" value="1"/>
</dbReference>
<dbReference type="HAMAP" id="MF_00259">
    <property type="entry name" value="GcvT"/>
    <property type="match status" value="1"/>
</dbReference>
<dbReference type="InterPro" id="IPR006223">
    <property type="entry name" value="GCS_T"/>
</dbReference>
<dbReference type="InterPro" id="IPR022903">
    <property type="entry name" value="GCS_T_bac"/>
</dbReference>
<dbReference type="InterPro" id="IPR013977">
    <property type="entry name" value="GCST_C"/>
</dbReference>
<dbReference type="InterPro" id="IPR006222">
    <property type="entry name" value="GCV_T_N"/>
</dbReference>
<dbReference type="InterPro" id="IPR028896">
    <property type="entry name" value="GcvT/YgfZ/DmdA"/>
</dbReference>
<dbReference type="InterPro" id="IPR029043">
    <property type="entry name" value="GcvT/YgfZ_C"/>
</dbReference>
<dbReference type="InterPro" id="IPR027266">
    <property type="entry name" value="TrmE/GcvT_dom1"/>
</dbReference>
<dbReference type="NCBIfam" id="TIGR00528">
    <property type="entry name" value="gcvT"/>
    <property type="match status" value="1"/>
</dbReference>
<dbReference type="NCBIfam" id="NF001567">
    <property type="entry name" value="PRK00389.1"/>
    <property type="match status" value="1"/>
</dbReference>
<dbReference type="PANTHER" id="PTHR43757">
    <property type="entry name" value="AMINOMETHYLTRANSFERASE"/>
    <property type="match status" value="1"/>
</dbReference>
<dbReference type="PANTHER" id="PTHR43757:SF2">
    <property type="entry name" value="AMINOMETHYLTRANSFERASE, MITOCHONDRIAL"/>
    <property type="match status" value="1"/>
</dbReference>
<dbReference type="Pfam" id="PF01571">
    <property type="entry name" value="GCV_T"/>
    <property type="match status" value="1"/>
</dbReference>
<dbReference type="Pfam" id="PF08669">
    <property type="entry name" value="GCV_T_C"/>
    <property type="match status" value="1"/>
</dbReference>
<dbReference type="PIRSF" id="PIRSF006487">
    <property type="entry name" value="GcvT"/>
    <property type="match status" value="1"/>
</dbReference>
<dbReference type="SUPFAM" id="SSF101790">
    <property type="entry name" value="Aminomethyltransferase beta-barrel domain"/>
    <property type="match status" value="1"/>
</dbReference>
<dbReference type="SUPFAM" id="SSF103025">
    <property type="entry name" value="Folate-binding domain"/>
    <property type="match status" value="1"/>
</dbReference>
<organism>
    <name type="scientific">Cupriavidus metallidurans (strain ATCC 43123 / DSM 2839 / NBRC 102507 / CH34)</name>
    <name type="common">Ralstonia metallidurans</name>
    <dbReference type="NCBI Taxonomy" id="266264"/>
    <lineage>
        <taxon>Bacteria</taxon>
        <taxon>Pseudomonadati</taxon>
        <taxon>Pseudomonadota</taxon>
        <taxon>Betaproteobacteria</taxon>
        <taxon>Burkholderiales</taxon>
        <taxon>Burkholderiaceae</taxon>
        <taxon>Cupriavidus</taxon>
    </lineage>
</organism>